<name>ISPE_PHOPR</name>
<proteinExistence type="inferred from homology"/>
<gene>
    <name evidence="1" type="primary">ispE</name>
    <name type="ordered locus">PBPRA2848</name>
</gene>
<comment type="function">
    <text evidence="1">Catalyzes the phosphorylation of the position 2 hydroxy group of 4-diphosphocytidyl-2C-methyl-D-erythritol.</text>
</comment>
<comment type="catalytic activity">
    <reaction evidence="1">
        <text>4-CDP-2-C-methyl-D-erythritol + ATP = 4-CDP-2-C-methyl-D-erythritol 2-phosphate + ADP + H(+)</text>
        <dbReference type="Rhea" id="RHEA:18437"/>
        <dbReference type="ChEBI" id="CHEBI:15378"/>
        <dbReference type="ChEBI" id="CHEBI:30616"/>
        <dbReference type="ChEBI" id="CHEBI:57823"/>
        <dbReference type="ChEBI" id="CHEBI:57919"/>
        <dbReference type="ChEBI" id="CHEBI:456216"/>
        <dbReference type="EC" id="2.7.1.148"/>
    </reaction>
</comment>
<comment type="pathway">
    <text evidence="1">Isoprenoid biosynthesis; isopentenyl diphosphate biosynthesis via DXP pathway; isopentenyl diphosphate from 1-deoxy-D-xylulose 5-phosphate: step 3/6.</text>
</comment>
<comment type="similarity">
    <text evidence="1">Belongs to the GHMP kinase family. IspE subfamily.</text>
</comment>
<reference key="1">
    <citation type="journal article" date="2005" name="Science">
        <title>Life at depth: Photobacterium profundum genome sequence and expression analysis.</title>
        <authorList>
            <person name="Vezzi A."/>
            <person name="Campanaro S."/>
            <person name="D'Angelo M."/>
            <person name="Simonato F."/>
            <person name="Vitulo N."/>
            <person name="Lauro F.M."/>
            <person name="Cestaro A."/>
            <person name="Malacrida G."/>
            <person name="Simionati B."/>
            <person name="Cannata N."/>
            <person name="Romualdi C."/>
            <person name="Bartlett D.H."/>
            <person name="Valle G."/>
        </authorList>
    </citation>
    <scope>NUCLEOTIDE SEQUENCE [LARGE SCALE GENOMIC DNA]</scope>
    <source>
        <strain>ATCC BAA-1253 / SS9</strain>
    </source>
</reference>
<sequence>MNNQSNCAPIFNRETHWPSPAKLNLFLYITGQRPNGYHELQTLFQFLDYGDTLTITATNTSAITINPAIEGVTTEDNLIYRAADALRQATGTMLGAHIEIDKILPMGGGLGGGSSNAATTLVALNYLWQTQLDLDKLADIGLALGADVPVFVKGFSAFAEGVGEKLLPATPQEKWFLVTKPNVSIATVDIFTHPDLIRNTEKRSLKALLAGVYENDCEKIVRRLHPEVDKAVSWLLEYAPSRLTGTGACVFAEFSSQQEADAILKKLPDWLHGFVAKGVNTSPLMATLHVHSTDCQ</sequence>
<feature type="chain" id="PRO_0000189244" description="4-diphosphocytidyl-2-C-methyl-D-erythritol kinase">
    <location>
        <begin position="1"/>
        <end position="296"/>
    </location>
</feature>
<feature type="active site" evidence="1">
    <location>
        <position position="22"/>
    </location>
</feature>
<feature type="active site" evidence="1">
    <location>
        <position position="147"/>
    </location>
</feature>
<feature type="binding site" evidence="1">
    <location>
        <begin position="105"/>
        <end position="115"/>
    </location>
    <ligand>
        <name>ATP</name>
        <dbReference type="ChEBI" id="CHEBI:30616"/>
    </ligand>
</feature>
<accession>Q6LNB1</accession>
<evidence type="ECO:0000255" key="1">
    <source>
        <dbReference type="HAMAP-Rule" id="MF_00061"/>
    </source>
</evidence>
<organism>
    <name type="scientific">Photobacterium profundum (strain SS9)</name>
    <dbReference type="NCBI Taxonomy" id="298386"/>
    <lineage>
        <taxon>Bacteria</taxon>
        <taxon>Pseudomonadati</taxon>
        <taxon>Pseudomonadota</taxon>
        <taxon>Gammaproteobacteria</taxon>
        <taxon>Vibrionales</taxon>
        <taxon>Vibrionaceae</taxon>
        <taxon>Photobacterium</taxon>
    </lineage>
</organism>
<dbReference type="EC" id="2.7.1.148" evidence="1"/>
<dbReference type="EMBL" id="CR378672">
    <property type="protein sequence ID" value="CAG21215.1"/>
    <property type="molecule type" value="Genomic_DNA"/>
</dbReference>
<dbReference type="SMR" id="Q6LNB1"/>
<dbReference type="STRING" id="298386.PBPRA2848"/>
<dbReference type="KEGG" id="ppr:PBPRA2848"/>
<dbReference type="eggNOG" id="COG1947">
    <property type="taxonomic scope" value="Bacteria"/>
</dbReference>
<dbReference type="HOGENOM" id="CLU_053057_3_0_6"/>
<dbReference type="UniPathway" id="UPA00056">
    <property type="reaction ID" value="UER00094"/>
</dbReference>
<dbReference type="Proteomes" id="UP000000593">
    <property type="component" value="Chromosome 1"/>
</dbReference>
<dbReference type="GO" id="GO:0050515">
    <property type="term" value="F:4-(cytidine 5'-diphospho)-2-C-methyl-D-erythritol kinase activity"/>
    <property type="evidence" value="ECO:0007669"/>
    <property type="project" value="UniProtKB-UniRule"/>
</dbReference>
<dbReference type="GO" id="GO:0005524">
    <property type="term" value="F:ATP binding"/>
    <property type="evidence" value="ECO:0007669"/>
    <property type="project" value="UniProtKB-UniRule"/>
</dbReference>
<dbReference type="GO" id="GO:0019288">
    <property type="term" value="P:isopentenyl diphosphate biosynthetic process, methylerythritol 4-phosphate pathway"/>
    <property type="evidence" value="ECO:0007669"/>
    <property type="project" value="UniProtKB-UniRule"/>
</dbReference>
<dbReference type="GO" id="GO:0016114">
    <property type="term" value="P:terpenoid biosynthetic process"/>
    <property type="evidence" value="ECO:0007669"/>
    <property type="project" value="InterPro"/>
</dbReference>
<dbReference type="FunFam" id="3.30.230.10:FF:000022">
    <property type="entry name" value="4-diphosphocytidyl-2-C-methyl-D-erythritol kinase"/>
    <property type="match status" value="1"/>
</dbReference>
<dbReference type="Gene3D" id="3.30.230.10">
    <property type="match status" value="1"/>
</dbReference>
<dbReference type="Gene3D" id="3.30.70.890">
    <property type="entry name" value="GHMP kinase, C-terminal domain"/>
    <property type="match status" value="1"/>
</dbReference>
<dbReference type="HAMAP" id="MF_00061">
    <property type="entry name" value="IspE"/>
    <property type="match status" value="1"/>
</dbReference>
<dbReference type="InterPro" id="IPR013750">
    <property type="entry name" value="GHMP_kinase_C_dom"/>
</dbReference>
<dbReference type="InterPro" id="IPR036554">
    <property type="entry name" value="GHMP_kinase_C_sf"/>
</dbReference>
<dbReference type="InterPro" id="IPR006204">
    <property type="entry name" value="GHMP_kinase_N_dom"/>
</dbReference>
<dbReference type="InterPro" id="IPR004424">
    <property type="entry name" value="IspE"/>
</dbReference>
<dbReference type="InterPro" id="IPR020568">
    <property type="entry name" value="Ribosomal_Su5_D2-typ_SF"/>
</dbReference>
<dbReference type="InterPro" id="IPR014721">
    <property type="entry name" value="Ribsml_uS5_D2-typ_fold_subgr"/>
</dbReference>
<dbReference type="NCBIfam" id="TIGR00154">
    <property type="entry name" value="ispE"/>
    <property type="match status" value="1"/>
</dbReference>
<dbReference type="PANTHER" id="PTHR43527">
    <property type="entry name" value="4-DIPHOSPHOCYTIDYL-2-C-METHYL-D-ERYTHRITOL KINASE, CHLOROPLASTIC"/>
    <property type="match status" value="1"/>
</dbReference>
<dbReference type="PANTHER" id="PTHR43527:SF2">
    <property type="entry name" value="4-DIPHOSPHOCYTIDYL-2-C-METHYL-D-ERYTHRITOL KINASE, CHLOROPLASTIC"/>
    <property type="match status" value="1"/>
</dbReference>
<dbReference type="Pfam" id="PF08544">
    <property type="entry name" value="GHMP_kinases_C"/>
    <property type="match status" value="1"/>
</dbReference>
<dbReference type="Pfam" id="PF00288">
    <property type="entry name" value="GHMP_kinases_N"/>
    <property type="match status" value="1"/>
</dbReference>
<dbReference type="PIRSF" id="PIRSF010376">
    <property type="entry name" value="IspE"/>
    <property type="match status" value="1"/>
</dbReference>
<dbReference type="SUPFAM" id="SSF55060">
    <property type="entry name" value="GHMP Kinase, C-terminal domain"/>
    <property type="match status" value="1"/>
</dbReference>
<dbReference type="SUPFAM" id="SSF54211">
    <property type="entry name" value="Ribosomal protein S5 domain 2-like"/>
    <property type="match status" value="1"/>
</dbReference>
<protein>
    <recommendedName>
        <fullName evidence="1">4-diphosphocytidyl-2-C-methyl-D-erythritol kinase</fullName>
        <shortName evidence="1">CMK</shortName>
        <ecNumber evidence="1">2.7.1.148</ecNumber>
    </recommendedName>
    <alternativeName>
        <fullName evidence="1">4-(cytidine-5'-diphospho)-2-C-methyl-D-erythritol kinase</fullName>
    </alternativeName>
</protein>
<keyword id="KW-0067">ATP-binding</keyword>
<keyword id="KW-0414">Isoprene biosynthesis</keyword>
<keyword id="KW-0418">Kinase</keyword>
<keyword id="KW-0547">Nucleotide-binding</keyword>
<keyword id="KW-1185">Reference proteome</keyword>
<keyword id="KW-0808">Transferase</keyword>